<reference key="1">
    <citation type="journal article" date="1994" name="J. Bacteriol.">
        <title>Phylogeny of mycoplasmalike organisms (phytoplasmas): a basis for their classification.</title>
        <authorList>
            <person name="Gundersen D.E."/>
            <person name="Lee I.M."/>
            <person name="Rehner S.A."/>
            <person name="Davis R.E."/>
            <person name="Kingsbury D.T."/>
        </authorList>
    </citation>
    <scope>NUCLEOTIDE SEQUENCE [GENOMIC DNA]</scope>
</reference>
<dbReference type="EMBL" id="L27036">
    <property type="protein sequence ID" value="AAA83946.1"/>
    <property type="molecule type" value="Genomic_DNA"/>
</dbReference>
<dbReference type="GO" id="GO:1990904">
    <property type="term" value="C:ribonucleoprotein complex"/>
    <property type="evidence" value="ECO:0007669"/>
    <property type="project" value="UniProtKB-KW"/>
</dbReference>
<dbReference type="GO" id="GO:0005840">
    <property type="term" value="C:ribosome"/>
    <property type="evidence" value="ECO:0007669"/>
    <property type="project" value="UniProtKB-KW"/>
</dbReference>
<dbReference type="GO" id="GO:0019843">
    <property type="term" value="F:rRNA binding"/>
    <property type="evidence" value="ECO:0007669"/>
    <property type="project" value="UniProtKB-KW"/>
</dbReference>
<name>RS19_PPWBP</name>
<accession>Q52093</accession>
<evidence type="ECO:0000250" key="1"/>
<evidence type="ECO:0000305" key="2"/>
<sequence length="14" mass="1668">FHGHTKDSKKNIKK</sequence>
<protein>
    <recommendedName>
        <fullName evidence="2">Small ribosomal subunit protein uS19</fullName>
    </recommendedName>
    <alternativeName>
        <fullName>30S ribosomal protein S19</fullName>
    </alternativeName>
</protein>
<proteinExistence type="inferred from homology"/>
<organism>
    <name type="scientific">Pigeon pea witches'-broom phytoplasma</name>
    <dbReference type="NCBI Taxonomy" id="37700"/>
    <lineage>
        <taxon>Bacteria</taxon>
        <taxon>Bacillati</taxon>
        <taxon>Mycoplasmatota</taxon>
        <taxon>Mollicutes</taxon>
        <taxon>Acholeplasmatales</taxon>
        <taxon>Acholeplasmataceae</taxon>
        <taxon>Candidatus Phytoplasma</taxon>
        <taxon>16SrIX (Pigeon pea witches'-broom group)</taxon>
    </lineage>
</organism>
<feature type="chain" id="PRO_0000129877" description="Small ribosomal subunit protein uS19">
    <location>
        <begin position="1" status="less than"/>
        <end position="14"/>
    </location>
</feature>
<feature type="non-terminal residue">
    <location>
        <position position="1"/>
    </location>
</feature>
<gene>
    <name type="primary">rpsS</name>
    <name type="synonym">rps19</name>
</gene>
<comment type="function">
    <text evidence="1">Protein S19 forms a complex with S13 that binds strongly to the 16S ribosomal RNA.</text>
</comment>
<comment type="similarity">
    <text evidence="2">Belongs to the universal ribosomal protein uS19 family.</text>
</comment>
<keyword id="KW-0687">Ribonucleoprotein</keyword>
<keyword id="KW-0689">Ribosomal protein</keyword>
<keyword id="KW-0694">RNA-binding</keyword>
<keyword id="KW-0699">rRNA-binding</keyword>